<keyword id="KW-0997">Cell inner membrane</keyword>
<keyword id="KW-1003">Cell membrane</keyword>
<keyword id="KW-0472">Membrane</keyword>
<keyword id="KW-0808">Transferase</keyword>
<keyword id="KW-0812">Transmembrane</keyword>
<keyword id="KW-1133">Transmembrane helix</keyword>
<dbReference type="EC" id="2.5.1.145" evidence="1"/>
<dbReference type="EMBL" id="CP001612">
    <property type="protein sequence ID" value="ACP53041.1"/>
    <property type="molecule type" value="Genomic_DNA"/>
</dbReference>
<dbReference type="RefSeq" id="WP_012719342.1">
    <property type="nucleotide sequence ID" value="NC_012633.1"/>
</dbReference>
<dbReference type="SMR" id="C3PM81"/>
<dbReference type="KEGG" id="raf:RAF_ORF0066"/>
<dbReference type="HOGENOM" id="CLU_013386_1_0_5"/>
<dbReference type="UniPathway" id="UPA00664"/>
<dbReference type="Proteomes" id="UP000002305">
    <property type="component" value="Chromosome"/>
</dbReference>
<dbReference type="GO" id="GO:0005886">
    <property type="term" value="C:plasma membrane"/>
    <property type="evidence" value="ECO:0007669"/>
    <property type="project" value="UniProtKB-SubCell"/>
</dbReference>
<dbReference type="GO" id="GO:0008961">
    <property type="term" value="F:phosphatidylglycerol-prolipoprotein diacylglyceryl transferase activity"/>
    <property type="evidence" value="ECO:0007669"/>
    <property type="project" value="UniProtKB-UniRule"/>
</dbReference>
<dbReference type="GO" id="GO:0042158">
    <property type="term" value="P:lipoprotein biosynthetic process"/>
    <property type="evidence" value="ECO:0007669"/>
    <property type="project" value="UniProtKB-UniRule"/>
</dbReference>
<dbReference type="HAMAP" id="MF_01147">
    <property type="entry name" value="Lgt"/>
    <property type="match status" value="1"/>
</dbReference>
<dbReference type="InterPro" id="IPR001640">
    <property type="entry name" value="Lgt"/>
</dbReference>
<dbReference type="NCBIfam" id="TIGR00544">
    <property type="entry name" value="lgt"/>
    <property type="match status" value="1"/>
</dbReference>
<dbReference type="PANTHER" id="PTHR30589:SF0">
    <property type="entry name" value="PHOSPHATIDYLGLYCEROL--PROLIPOPROTEIN DIACYLGLYCERYL TRANSFERASE"/>
    <property type="match status" value="1"/>
</dbReference>
<dbReference type="PANTHER" id="PTHR30589">
    <property type="entry name" value="PROLIPOPROTEIN DIACYLGLYCERYL TRANSFERASE"/>
    <property type="match status" value="1"/>
</dbReference>
<dbReference type="Pfam" id="PF01790">
    <property type="entry name" value="LGT"/>
    <property type="match status" value="1"/>
</dbReference>
<dbReference type="PROSITE" id="PS01311">
    <property type="entry name" value="LGT"/>
    <property type="match status" value="1"/>
</dbReference>
<feature type="chain" id="PRO_1000213657" description="Phosphatidylglycerol--prolipoprotein diacylglyceryl transferase">
    <location>
        <begin position="1"/>
        <end position="259"/>
    </location>
</feature>
<feature type="transmembrane region" description="Helical" evidence="1">
    <location>
        <begin position="9"/>
        <end position="29"/>
    </location>
</feature>
<feature type="transmembrane region" description="Helical" evidence="1">
    <location>
        <begin position="55"/>
        <end position="75"/>
    </location>
</feature>
<feature type="transmembrane region" description="Helical" evidence="1">
    <location>
        <begin position="92"/>
        <end position="112"/>
    </location>
</feature>
<feature type="transmembrane region" description="Helical" evidence="1">
    <location>
        <begin position="117"/>
        <end position="137"/>
    </location>
</feature>
<feature type="transmembrane region" description="Helical" evidence="1">
    <location>
        <begin position="172"/>
        <end position="192"/>
    </location>
</feature>
<feature type="transmembrane region" description="Helical" evidence="1">
    <location>
        <begin position="201"/>
        <end position="221"/>
    </location>
</feature>
<feature type="transmembrane region" description="Helical" evidence="1">
    <location>
        <begin position="228"/>
        <end position="248"/>
    </location>
</feature>
<feature type="binding site" evidence="1">
    <location>
        <position position="138"/>
    </location>
    <ligand>
        <name>a 1,2-diacyl-sn-glycero-3-phospho-(1'-sn-glycerol)</name>
        <dbReference type="ChEBI" id="CHEBI:64716"/>
    </ligand>
</feature>
<name>LGT_RICAE</name>
<organism>
    <name type="scientific">Rickettsia africae (strain ESF-5)</name>
    <dbReference type="NCBI Taxonomy" id="347255"/>
    <lineage>
        <taxon>Bacteria</taxon>
        <taxon>Pseudomonadati</taxon>
        <taxon>Pseudomonadota</taxon>
        <taxon>Alphaproteobacteria</taxon>
        <taxon>Rickettsiales</taxon>
        <taxon>Rickettsiaceae</taxon>
        <taxon>Rickettsieae</taxon>
        <taxon>Rickettsia</taxon>
        <taxon>spotted fever group</taxon>
    </lineage>
</organism>
<sequence>MTFPNINPIIFSIGPLAISWYSLSYVIGILLGWFYANKIIEKFKPQITKKNLEDFITYAVIGIIVGGRLGFVLLYNPSRYFSNPIDILKTYEGGMSFHGGALGGIITAYLFCRKYKINFLSLTDIIAPVVPIGLFLGRIANFINGELYGRITNSSFGMIFPNSDLMPRHPSQLYEAFFEGLVLFSILAYTTFKHKTLKKCGLNSGIFFTFYGLFRITIEIFREPDIQIGFILDSLTMGQILSVPMLLLGGYLICQSNPK</sequence>
<gene>
    <name evidence="1" type="primary">lgt</name>
    <name type="ordered locus">RAF_ORF0066</name>
</gene>
<evidence type="ECO:0000255" key="1">
    <source>
        <dbReference type="HAMAP-Rule" id="MF_01147"/>
    </source>
</evidence>
<comment type="function">
    <text evidence="1">Catalyzes the transfer of the diacylglyceryl group from phosphatidylglycerol to the sulfhydryl group of the N-terminal cysteine of a prolipoprotein, the first step in the formation of mature lipoproteins.</text>
</comment>
<comment type="catalytic activity">
    <reaction evidence="1">
        <text>L-cysteinyl-[prolipoprotein] + a 1,2-diacyl-sn-glycero-3-phospho-(1'-sn-glycerol) = an S-1,2-diacyl-sn-glyceryl-L-cysteinyl-[prolipoprotein] + sn-glycerol 1-phosphate + H(+)</text>
        <dbReference type="Rhea" id="RHEA:56712"/>
        <dbReference type="Rhea" id="RHEA-COMP:14679"/>
        <dbReference type="Rhea" id="RHEA-COMP:14680"/>
        <dbReference type="ChEBI" id="CHEBI:15378"/>
        <dbReference type="ChEBI" id="CHEBI:29950"/>
        <dbReference type="ChEBI" id="CHEBI:57685"/>
        <dbReference type="ChEBI" id="CHEBI:64716"/>
        <dbReference type="ChEBI" id="CHEBI:140658"/>
        <dbReference type="EC" id="2.5.1.145"/>
    </reaction>
</comment>
<comment type="pathway">
    <text evidence="1">Protein modification; lipoprotein biosynthesis (diacylglyceryl transfer).</text>
</comment>
<comment type="subcellular location">
    <subcellularLocation>
        <location evidence="1">Cell inner membrane</location>
        <topology evidence="1">Multi-pass membrane protein</topology>
    </subcellularLocation>
</comment>
<comment type="similarity">
    <text evidence="1">Belongs to the Lgt family.</text>
</comment>
<proteinExistence type="inferred from homology"/>
<protein>
    <recommendedName>
        <fullName evidence="1">Phosphatidylglycerol--prolipoprotein diacylglyceryl transferase</fullName>
        <ecNumber evidence="1">2.5.1.145</ecNumber>
    </recommendedName>
</protein>
<accession>C3PM81</accession>
<reference key="1">
    <citation type="journal article" date="2009" name="BMC Genomics">
        <title>Analysis of the Rickettsia africae genome reveals that virulence acquisition in Rickettsia species may be explained by genome reduction.</title>
        <authorList>
            <person name="Fournier P.-E."/>
            <person name="El Karkouri K."/>
            <person name="Leroy Q."/>
            <person name="Robert C."/>
            <person name="Giumelli B."/>
            <person name="Renesto P."/>
            <person name="Socolovschi C."/>
            <person name="Parola P."/>
            <person name="Audic S."/>
            <person name="Raoult D."/>
        </authorList>
    </citation>
    <scope>NUCLEOTIDE SEQUENCE [LARGE SCALE GENOMIC DNA]</scope>
    <source>
        <strain>ESF-5</strain>
    </source>
</reference>